<feature type="chain" id="PRO_0000255652" description="DNA integrity scanning protein DisA">
    <location>
        <begin position="1"/>
        <end position="351"/>
    </location>
</feature>
<feature type="domain" description="DAC" evidence="2">
    <location>
        <begin position="4"/>
        <end position="142"/>
    </location>
</feature>
<feature type="binding site" evidence="1">
    <location>
        <position position="71"/>
    </location>
    <ligand>
        <name>ATP</name>
        <dbReference type="ChEBI" id="CHEBI:30616"/>
    </ligand>
</feature>
<feature type="binding site" evidence="1">
    <location>
        <position position="89"/>
    </location>
    <ligand>
        <name>ATP</name>
        <dbReference type="ChEBI" id="CHEBI:30616"/>
    </ligand>
</feature>
<feature type="binding site" evidence="1">
    <location>
        <begin position="102"/>
        <end position="106"/>
    </location>
    <ligand>
        <name>ATP</name>
        <dbReference type="ChEBI" id="CHEBI:30616"/>
    </ligand>
</feature>
<gene>
    <name evidence="1" type="primary">disA</name>
    <name type="ordered locus">STH3127</name>
</gene>
<reference key="1">
    <citation type="journal article" date="2004" name="Nucleic Acids Res.">
        <title>Genome sequence of Symbiobacterium thermophilum, an uncultivable bacterium that depends on microbial commensalism.</title>
        <authorList>
            <person name="Ueda K."/>
            <person name="Yamashita A."/>
            <person name="Ishikawa J."/>
            <person name="Shimada M."/>
            <person name="Watsuji T."/>
            <person name="Morimura K."/>
            <person name="Ikeda H."/>
            <person name="Hattori M."/>
            <person name="Beppu T."/>
        </authorList>
    </citation>
    <scope>NUCLEOTIDE SEQUENCE [LARGE SCALE GENOMIC DNA]</scope>
    <source>
        <strain>DSM 24528 / JCM 14929 / IAM 14863 / T</strain>
    </source>
</reference>
<accession>Q67JP1</accession>
<organism>
    <name type="scientific">Symbiobacterium thermophilum (strain DSM 24528 / JCM 14929 / IAM 14863 / T)</name>
    <dbReference type="NCBI Taxonomy" id="292459"/>
    <lineage>
        <taxon>Bacteria</taxon>
        <taxon>Bacillati</taxon>
        <taxon>Bacillota</taxon>
        <taxon>Clostridia</taxon>
        <taxon>Eubacteriales</taxon>
        <taxon>Symbiobacteriaceae</taxon>
        <taxon>Symbiobacterium</taxon>
    </lineage>
</organism>
<protein>
    <recommendedName>
        <fullName evidence="1">DNA integrity scanning protein DisA</fullName>
    </recommendedName>
    <alternativeName>
        <fullName evidence="1">Cyclic di-AMP synthase</fullName>
        <shortName evidence="1">c-di-AMP synthase</shortName>
    </alternativeName>
    <alternativeName>
        <fullName evidence="1">Diadenylate cyclase</fullName>
        <ecNumber evidence="1">2.7.7.85</ecNumber>
    </alternativeName>
</protein>
<dbReference type="EC" id="2.7.7.85" evidence="1"/>
<dbReference type="EMBL" id="AP006840">
    <property type="protein sequence ID" value="BAD42109.1"/>
    <property type="molecule type" value="Genomic_DNA"/>
</dbReference>
<dbReference type="RefSeq" id="WP_011197240.1">
    <property type="nucleotide sequence ID" value="NC_006177.1"/>
</dbReference>
<dbReference type="SMR" id="Q67JP1"/>
<dbReference type="STRING" id="292459.STH3127"/>
<dbReference type="KEGG" id="sth:STH3127"/>
<dbReference type="eggNOG" id="COG1623">
    <property type="taxonomic scope" value="Bacteria"/>
</dbReference>
<dbReference type="HOGENOM" id="CLU_787128_0_0_9"/>
<dbReference type="OrthoDB" id="41841at2"/>
<dbReference type="Proteomes" id="UP000000417">
    <property type="component" value="Chromosome"/>
</dbReference>
<dbReference type="GO" id="GO:0004016">
    <property type="term" value="F:adenylate cyclase activity"/>
    <property type="evidence" value="ECO:0007669"/>
    <property type="project" value="TreeGrafter"/>
</dbReference>
<dbReference type="GO" id="GO:0005524">
    <property type="term" value="F:ATP binding"/>
    <property type="evidence" value="ECO:0007669"/>
    <property type="project" value="UniProtKB-UniRule"/>
</dbReference>
<dbReference type="GO" id="GO:0140097">
    <property type="term" value="F:catalytic activity, acting on DNA"/>
    <property type="evidence" value="ECO:0007669"/>
    <property type="project" value="UniProtKB-ARBA"/>
</dbReference>
<dbReference type="GO" id="GO:0106408">
    <property type="term" value="F:diadenylate cyclase activity"/>
    <property type="evidence" value="ECO:0007669"/>
    <property type="project" value="UniProtKB-EC"/>
</dbReference>
<dbReference type="GO" id="GO:0003677">
    <property type="term" value="F:DNA binding"/>
    <property type="evidence" value="ECO:0007669"/>
    <property type="project" value="UniProtKB-UniRule"/>
</dbReference>
<dbReference type="GO" id="GO:0016787">
    <property type="term" value="F:hydrolase activity"/>
    <property type="evidence" value="ECO:0007669"/>
    <property type="project" value="UniProtKB-ARBA"/>
</dbReference>
<dbReference type="GO" id="GO:0006281">
    <property type="term" value="P:DNA repair"/>
    <property type="evidence" value="ECO:0007669"/>
    <property type="project" value="UniProtKB-UniRule"/>
</dbReference>
<dbReference type="FunFam" id="3.40.1700.10:FF:000001">
    <property type="entry name" value="DNA integrity scanning protein DisA"/>
    <property type="match status" value="1"/>
</dbReference>
<dbReference type="Gene3D" id="1.10.150.20">
    <property type="entry name" value="5' to 3' exonuclease, C-terminal subdomain"/>
    <property type="match status" value="1"/>
</dbReference>
<dbReference type="Gene3D" id="1.20.1260.110">
    <property type="entry name" value="DNA integrity scanning linker region"/>
    <property type="match status" value="1"/>
</dbReference>
<dbReference type="Gene3D" id="3.40.1700.10">
    <property type="entry name" value="DNA integrity scanning protein, DisA, N-terminal domain"/>
    <property type="match status" value="1"/>
</dbReference>
<dbReference type="HAMAP" id="MF_01438">
    <property type="entry name" value="DisA"/>
    <property type="match status" value="1"/>
</dbReference>
<dbReference type="InterPro" id="IPR050338">
    <property type="entry name" value="DisA"/>
</dbReference>
<dbReference type="InterPro" id="IPR038331">
    <property type="entry name" value="DisA_sf"/>
</dbReference>
<dbReference type="InterPro" id="IPR036888">
    <property type="entry name" value="DNA_integrity_DisA_N_sf"/>
</dbReference>
<dbReference type="InterPro" id="IPR018906">
    <property type="entry name" value="DNA_integrity_scan_DisA_link"/>
</dbReference>
<dbReference type="InterPro" id="IPR003390">
    <property type="entry name" value="DNA_integrity_scan_DisA_N"/>
</dbReference>
<dbReference type="InterPro" id="IPR023763">
    <property type="entry name" value="DNA_integrity_scanning_protein"/>
</dbReference>
<dbReference type="InterPro" id="IPR000445">
    <property type="entry name" value="HhH_motif"/>
</dbReference>
<dbReference type="InterPro" id="IPR010994">
    <property type="entry name" value="RuvA_2-like"/>
</dbReference>
<dbReference type="NCBIfam" id="NF010009">
    <property type="entry name" value="PRK13482.1"/>
    <property type="match status" value="1"/>
</dbReference>
<dbReference type="PANTHER" id="PTHR34185">
    <property type="entry name" value="DIADENYLATE CYCLASE"/>
    <property type="match status" value="1"/>
</dbReference>
<dbReference type="PANTHER" id="PTHR34185:SF3">
    <property type="entry name" value="DNA INTEGRITY SCANNING PROTEIN DISA"/>
    <property type="match status" value="1"/>
</dbReference>
<dbReference type="Pfam" id="PF02457">
    <property type="entry name" value="DAC"/>
    <property type="match status" value="1"/>
</dbReference>
<dbReference type="Pfam" id="PF10635">
    <property type="entry name" value="DisA-linker"/>
    <property type="match status" value="1"/>
</dbReference>
<dbReference type="Pfam" id="PF00633">
    <property type="entry name" value="HHH"/>
    <property type="match status" value="1"/>
</dbReference>
<dbReference type="SUPFAM" id="SSF47781">
    <property type="entry name" value="RuvA domain 2-like"/>
    <property type="match status" value="1"/>
</dbReference>
<dbReference type="SUPFAM" id="SSF143597">
    <property type="entry name" value="YojJ-like"/>
    <property type="match status" value="1"/>
</dbReference>
<dbReference type="PROSITE" id="PS51794">
    <property type="entry name" value="DAC"/>
    <property type="match status" value="1"/>
</dbReference>
<proteinExistence type="inferred from homology"/>
<keyword id="KW-0067">ATP-binding</keyword>
<keyword id="KW-0227">DNA damage</keyword>
<keyword id="KW-0234">DNA repair</keyword>
<keyword id="KW-0238">DNA-binding</keyword>
<keyword id="KW-0460">Magnesium</keyword>
<keyword id="KW-0547">Nucleotide-binding</keyword>
<keyword id="KW-0548">Nucleotidyltransferase</keyword>
<keyword id="KW-1185">Reference proteome</keyword>
<keyword id="KW-0808">Transferase</keyword>
<comment type="function">
    <text evidence="1">Participates in a DNA-damage check-point that is active prior to asymmetric division when DNA is damaged. DisA forms globular foci that rapidly scan along the chromosomes during sporulation, searching for lesions. When a lesion is present, DisA pauses at the lesion site. This triggers a cellular response that culminates in a temporary block in sporulation initiation.</text>
</comment>
<comment type="function">
    <text evidence="1">Also has diadenylate cyclase activity, catalyzing the condensation of 2 ATP molecules into cyclic di-AMP (c-di-AMP). c-di-AMP acts as a signaling molecule that couples DNA integrity with progression of sporulation. The rise in c-di-AMP level generated by DisA while scanning the chromosome, operates as a positive signal that advances sporulation; upon encountering a lesion, the DisA focus arrests at the damaged site and halts c-di-AMP synthesis.</text>
</comment>
<comment type="catalytic activity">
    <reaction evidence="1">
        <text>2 ATP = 3',3'-c-di-AMP + 2 diphosphate</text>
        <dbReference type="Rhea" id="RHEA:35655"/>
        <dbReference type="ChEBI" id="CHEBI:30616"/>
        <dbReference type="ChEBI" id="CHEBI:33019"/>
        <dbReference type="ChEBI" id="CHEBI:71500"/>
        <dbReference type="EC" id="2.7.7.85"/>
    </reaction>
</comment>
<comment type="cofactor">
    <cofactor evidence="1">
        <name>Mg(2+)</name>
        <dbReference type="ChEBI" id="CHEBI:18420"/>
    </cofactor>
</comment>
<comment type="subunit">
    <text evidence="1">Homooctamer.</text>
</comment>
<comment type="similarity">
    <text evidence="1">Belongs to the DisA family.</text>
</comment>
<name>DISA_SYMTH</name>
<sequence>MEDRSGFWQVLQQLAPGTALREGLESILLARTGSLIVVGDSPEVLALVDGGFRLDCEFTPTRLYELAKMDGAIILTRDAQRILYANAMLVPDPSIPTSETGTRHRTAERVARQTGELVISISQRRDLITLYKGPMKYILRDFAVVLTKANQALQTLEKYKLVRDQAVARLSALELDDMVSALDVALVVQRTEMLLRIGKEIERYIVELGTEGRLVAMQLEELLAGVAAEGLLIIRDYASTDDPQHAAALRQQMAEWTYEELQDLAAVARLLGAGALDSPLGARGYRMLRRIPRLPAAVIENLVARFGRLQRVLAASLEELDDVEGIGEVRARAIQEGLRRMRMQFALERQL</sequence>
<evidence type="ECO:0000255" key="1">
    <source>
        <dbReference type="HAMAP-Rule" id="MF_01438"/>
    </source>
</evidence>
<evidence type="ECO:0000255" key="2">
    <source>
        <dbReference type="PROSITE-ProRule" id="PRU01130"/>
    </source>
</evidence>